<gene>
    <name type="ordered locus">RPC_4414</name>
</gene>
<evidence type="ECO:0000255" key="1">
    <source>
        <dbReference type="HAMAP-Rule" id="MF_00528"/>
    </source>
</evidence>
<accession>Q20Y49</accession>
<organism>
    <name type="scientific">Rhodopseudomonas palustris (strain BisB18)</name>
    <dbReference type="NCBI Taxonomy" id="316056"/>
    <lineage>
        <taxon>Bacteria</taxon>
        <taxon>Pseudomonadati</taxon>
        <taxon>Pseudomonadota</taxon>
        <taxon>Alphaproteobacteria</taxon>
        <taxon>Hyphomicrobiales</taxon>
        <taxon>Nitrobacteraceae</taxon>
        <taxon>Rhodopseudomonas</taxon>
    </lineage>
</organism>
<comment type="function">
    <text evidence="1">Nucleoside triphosphate pyrophosphatase that hydrolyzes dTTP and UTP. May have a dual role in cell division arrest and in preventing the incorporation of modified nucleotides into cellular nucleic acids.</text>
</comment>
<comment type="catalytic activity">
    <reaction evidence="1">
        <text>dTTP + H2O = dTMP + diphosphate + H(+)</text>
        <dbReference type="Rhea" id="RHEA:28534"/>
        <dbReference type="ChEBI" id="CHEBI:15377"/>
        <dbReference type="ChEBI" id="CHEBI:15378"/>
        <dbReference type="ChEBI" id="CHEBI:33019"/>
        <dbReference type="ChEBI" id="CHEBI:37568"/>
        <dbReference type="ChEBI" id="CHEBI:63528"/>
        <dbReference type="EC" id="3.6.1.9"/>
    </reaction>
</comment>
<comment type="catalytic activity">
    <reaction evidence="1">
        <text>UTP + H2O = UMP + diphosphate + H(+)</text>
        <dbReference type="Rhea" id="RHEA:29395"/>
        <dbReference type="ChEBI" id="CHEBI:15377"/>
        <dbReference type="ChEBI" id="CHEBI:15378"/>
        <dbReference type="ChEBI" id="CHEBI:33019"/>
        <dbReference type="ChEBI" id="CHEBI:46398"/>
        <dbReference type="ChEBI" id="CHEBI:57865"/>
        <dbReference type="EC" id="3.6.1.9"/>
    </reaction>
</comment>
<comment type="cofactor">
    <cofactor evidence="1">
        <name>a divalent metal cation</name>
        <dbReference type="ChEBI" id="CHEBI:60240"/>
    </cofactor>
</comment>
<comment type="subcellular location">
    <subcellularLocation>
        <location evidence="1">Cytoplasm</location>
    </subcellularLocation>
</comment>
<comment type="similarity">
    <text evidence="1">Belongs to the Maf family. YhdE subfamily.</text>
</comment>
<proteinExistence type="inferred from homology"/>
<name>NTPPA_RHOPB</name>
<reference key="1">
    <citation type="submission" date="2006-03" db="EMBL/GenBank/DDBJ databases">
        <title>Complete sequence of Rhodopseudomonas palustris BisB18.</title>
        <authorList>
            <consortium name="US DOE Joint Genome Institute"/>
            <person name="Copeland A."/>
            <person name="Lucas S."/>
            <person name="Lapidus A."/>
            <person name="Barry K."/>
            <person name="Detter J.C."/>
            <person name="Glavina del Rio T."/>
            <person name="Hammon N."/>
            <person name="Israni S."/>
            <person name="Dalin E."/>
            <person name="Tice H."/>
            <person name="Pitluck S."/>
            <person name="Chain P."/>
            <person name="Malfatti S."/>
            <person name="Shin M."/>
            <person name="Vergez L."/>
            <person name="Schmutz J."/>
            <person name="Larimer F."/>
            <person name="Land M."/>
            <person name="Hauser L."/>
            <person name="Pelletier D.A."/>
            <person name="Kyrpides N."/>
            <person name="Anderson I."/>
            <person name="Oda Y."/>
            <person name="Harwood C.S."/>
            <person name="Richardson P."/>
        </authorList>
    </citation>
    <scope>NUCLEOTIDE SEQUENCE [LARGE SCALE GENOMIC DNA]</scope>
    <source>
        <strain>BisB18</strain>
    </source>
</reference>
<feature type="chain" id="PRO_0000267403" description="dTTP/UTP pyrophosphatase">
    <location>
        <begin position="1"/>
        <end position="207"/>
    </location>
</feature>
<feature type="active site" description="Proton acceptor" evidence="1">
    <location>
        <position position="79"/>
    </location>
</feature>
<feature type="site" description="Important for substrate specificity" evidence="1">
    <location>
        <position position="15"/>
    </location>
</feature>
<feature type="site" description="Important for substrate specificity" evidence="1">
    <location>
        <position position="80"/>
    </location>
</feature>
<feature type="site" description="Important for substrate specificity" evidence="1">
    <location>
        <position position="163"/>
    </location>
</feature>
<sequence>MLGRPKFVLASGSPRRLALLNQAGIEPDALRPADIDETPTRGELPRSCANRLARAKAEAALKSVQLDDDLRGAFVLAADTVVAVGRRILPKAELVDEASQCLRLLSGRNHRVYTAICLVTPKESFRQRLIETKVRFKRLNEDDIEAYVGSGEWRGKAGGYAVQGIAGTFVVKIVGSYTNIVGLPLYETISLLGGEGFPIRAGWLNAS</sequence>
<protein>
    <recommendedName>
        <fullName evidence="1">dTTP/UTP pyrophosphatase</fullName>
        <shortName evidence="1">dTTPase/UTPase</shortName>
        <ecNumber evidence="1">3.6.1.9</ecNumber>
    </recommendedName>
    <alternativeName>
        <fullName evidence="1">Nucleoside triphosphate pyrophosphatase</fullName>
    </alternativeName>
    <alternativeName>
        <fullName evidence="1">Nucleotide pyrophosphatase</fullName>
        <shortName evidence="1">Nucleotide PPase</shortName>
    </alternativeName>
</protein>
<dbReference type="EC" id="3.6.1.9" evidence="1"/>
<dbReference type="EMBL" id="CP000301">
    <property type="protein sequence ID" value="ABD89937.1"/>
    <property type="molecule type" value="Genomic_DNA"/>
</dbReference>
<dbReference type="SMR" id="Q20Y49"/>
<dbReference type="STRING" id="316056.RPC_4414"/>
<dbReference type="KEGG" id="rpc:RPC_4414"/>
<dbReference type="eggNOG" id="COG0424">
    <property type="taxonomic scope" value="Bacteria"/>
</dbReference>
<dbReference type="HOGENOM" id="CLU_040416_2_0_5"/>
<dbReference type="OrthoDB" id="9807767at2"/>
<dbReference type="GO" id="GO:0005737">
    <property type="term" value="C:cytoplasm"/>
    <property type="evidence" value="ECO:0007669"/>
    <property type="project" value="UniProtKB-SubCell"/>
</dbReference>
<dbReference type="GO" id="GO:0036218">
    <property type="term" value="F:dTTP diphosphatase activity"/>
    <property type="evidence" value="ECO:0007669"/>
    <property type="project" value="RHEA"/>
</dbReference>
<dbReference type="GO" id="GO:0036221">
    <property type="term" value="F:UTP diphosphatase activity"/>
    <property type="evidence" value="ECO:0007669"/>
    <property type="project" value="RHEA"/>
</dbReference>
<dbReference type="GO" id="GO:0009117">
    <property type="term" value="P:nucleotide metabolic process"/>
    <property type="evidence" value="ECO:0007669"/>
    <property type="project" value="UniProtKB-KW"/>
</dbReference>
<dbReference type="CDD" id="cd00555">
    <property type="entry name" value="Maf"/>
    <property type="match status" value="1"/>
</dbReference>
<dbReference type="FunFam" id="3.90.950.10:FF:000005">
    <property type="entry name" value="7-methyl-GTP pyrophosphatase"/>
    <property type="match status" value="1"/>
</dbReference>
<dbReference type="Gene3D" id="3.90.950.10">
    <property type="match status" value="1"/>
</dbReference>
<dbReference type="HAMAP" id="MF_00528">
    <property type="entry name" value="Maf"/>
    <property type="match status" value="1"/>
</dbReference>
<dbReference type="InterPro" id="IPR029001">
    <property type="entry name" value="ITPase-like_fam"/>
</dbReference>
<dbReference type="InterPro" id="IPR003697">
    <property type="entry name" value="Maf-like"/>
</dbReference>
<dbReference type="NCBIfam" id="TIGR00172">
    <property type="entry name" value="maf"/>
    <property type="match status" value="1"/>
</dbReference>
<dbReference type="NCBIfam" id="NF002401">
    <property type="entry name" value="PRK01441.1"/>
    <property type="match status" value="1"/>
</dbReference>
<dbReference type="PANTHER" id="PTHR43213">
    <property type="entry name" value="BIFUNCTIONAL DTTP/UTP PYROPHOSPHATASE/METHYLTRANSFERASE PROTEIN-RELATED"/>
    <property type="match status" value="1"/>
</dbReference>
<dbReference type="PANTHER" id="PTHR43213:SF5">
    <property type="entry name" value="BIFUNCTIONAL DTTP_UTP PYROPHOSPHATASE_METHYLTRANSFERASE PROTEIN-RELATED"/>
    <property type="match status" value="1"/>
</dbReference>
<dbReference type="Pfam" id="PF02545">
    <property type="entry name" value="Maf"/>
    <property type="match status" value="1"/>
</dbReference>
<dbReference type="PIRSF" id="PIRSF006305">
    <property type="entry name" value="Maf"/>
    <property type="match status" value="1"/>
</dbReference>
<dbReference type="SUPFAM" id="SSF52972">
    <property type="entry name" value="ITPase-like"/>
    <property type="match status" value="1"/>
</dbReference>
<keyword id="KW-0963">Cytoplasm</keyword>
<keyword id="KW-0378">Hydrolase</keyword>
<keyword id="KW-0546">Nucleotide metabolism</keyword>